<evidence type="ECO:0000255" key="1">
    <source>
        <dbReference type="HAMAP-Rule" id="MF_00600"/>
    </source>
</evidence>
<evidence type="ECO:0000256" key="2">
    <source>
        <dbReference type="SAM" id="MobiDB-lite"/>
    </source>
</evidence>
<comment type="function">
    <text evidence="1">Together with its co-chaperonin GroES, plays an essential role in assisting protein folding. The GroEL-GroES system forms a nano-cage that allows encapsulation of the non-native substrate proteins and provides a physical environment optimized to promote and accelerate protein folding.</text>
</comment>
<comment type="catalytic activity">
    <reaction evidence="1">
        <text>ATP + H2O + a folded polypeptide = ADP + phosphate + an unfolded polypeptide.</text>
        <dbReference type="EC" id="5.6.1.7"/>
    </reaction>
</comment>
<comment type="subunit">
    <text evidence="1">Forms a cylinder of 14 subunits composed of two heptameric rings stacked back-to-back. Interacts with the co-chaperonin GroES.</text>
</comment>
<comment type="subcellular location">
    <subcellularLocation>
        <location evidence="1">Cytoplasm</location>
    </subcellularLocation>
</comment>
<comment type="similarity">
    <text evidence="1">Belongs to the chaperonin (HSP60) family.</text>
</comment>
<proteinExistence type="inferred from homology"/>
<sequence length="553" mass="57911">MAKLLKFSDESRAALERGMNALADAVRVTIGPRGRNVVLEKSFGAPDIVNDGDTIAKEIDLEDPFENIGAKLIQQVASKTKDKAGDGTTTATVLAQAMVEEGLRNTAAGASPIELRRGMEKAVALIVKGLGERSQSVSGDAIRQVATVSAGGDDEVGRMVAEAMDKVTVDGVITVEESKSLATELEVTEGMAFDRGYSSPYFVTDGDRQICEFENALLLLTDRKISAVADLVPVLETVQKTGSPLVILAEEVDGEALATLVVNKNRGVLQVAAVRAPSFGERRKAALADIAILTGGTVISEDRAMTLDKVTLEDLGRARRITISKEETTIVASEDSRDAVAERVASIRRELENSDSEYDREKLNERIAKLAGGVAVIKVGAPTETELKNRKLRIEDALNATRAAVEEGIVAGGGSTLIQLAGSLDGLANQLHGDQRTGVEIVHRALSAPLRQIAINAGANGDVVVEQVQRSGQGFNALTGGYENLLEAGILDAAKVVRLGLQDAVSIASLLITTEVVVADKPEPPAAPAPGGDPMGGMGGMGGMGGMGMPGMM</sequence>
<name>CH601_SYNPW</name>
<feature type="chain" id="PRO_0000332092" description="Chaperonin GroEL 1">
    <location>
        <begin position="1"/>
        <end position="553"/>
    </location>
</feature>
<feature type="region of interest" description="Disordered" evidence="2">
    <location>
        <begin position="521"/>
        <end position="542"/>
    </location>
</feature>
<feature type="compositionally biased region" description="Gly residues" evidence="2">
    <location>
        <begin position="533"/>
        <end position="542"/>
    </location>
</feature>
<feature type="binding site" evidence="1">
    <location>
        <begin position="29"/>
        <end position="32"/>
    </location>
    <ligand>
        <name>ATP</name>
        <dbReference type="ChEBI" id="CHEBI:30616"/>
    </ligand>
</feature>
<feature type="binding site" evidence="1">
    <location>
        <begin position="86"/>
        <end position="90"/>
    </location>
    <ligand>
        <name>ATP</name>
        <dbReference type="ChEBI" id="CHEBI:30616"/>
    </ligand>
</feature>
<feature type="binding site" evidence="1">
    <location>
        <position position="413"/>
    </location>
    <ligand>
        <name>ATP</name>
        <dbReference type="ChEBI" id="CHEBI:30616"/>
    </ligand>
</feature>
<feature type="binding site" evidence="1">
    <location>
        <begin position="476"/>
        <end position="478"/>
    </location>
    <ligand>
        <name>ATP</name>
        <dbReference type="ChEBI" id="CHEBI:30616"/>
    </ligand>
</feature>
<feature type="binding site" evidence="1">
    <location>
        <position position="492"/>
    </location>
    <ligand>
        <name>ATP</name>
        <dbReference type="ChEBI" id="CHEBI:30616"/>
    </ligand>
</feature>
<organism>
    <name type="scientific">Synechococcus sp. (strain WH7803)</name>
    <dbReference type="NCBI Taxonomy" id="32051"/>
    <lineage>
        <taxon>Bacteria</taxon>
        <taxon>Bacillati</taxon>
        <taxon>Cyanobacteriota</taxon>
        <taxon>Cyanophyceae</taxon>
        <taxon>Synechococcales</taxon>
        <taxon>Synechococcaceae</taxon>
        <taxon>Synechococcus</taxon>
    </lineage>
</organism>
<dbReference type="EC" id="5.6.1.7" evidence="1"/>
<dbReference type="EMBL" id="CT971583">
    <property type="protein sequence ID" value="CAK24289.1"/>
    <property type="molecule type" value="Genomic_DNA"/>
</dbReference>
<dbReference type="SMR" id="A5GMX4"/>
<dbReference type="STRING" id="32051.SynWH7803_1863"/>
<dbReference type="KEGG" id="syx:SynWH7803_1863"/>
<dbReference type="eggNOG" id="COG0459">
    <property type="taxonomic scope" value="Bacteria"/>
</dbReference>
<dbReference type="HOGENOM" id="CLU_016503_3_0_3"/>
<dbReference type="OrthoDB" id="9766614at2"/>
<dbReference type="Proteomes" id="UP000001566">
    <property type="component" value="Chromosome"/>
</dbReference>
<dbReference type="GO" id="GO:0005737">
    <property type="term" value="C:cytoplasm"/>
    <property type="evidence" value="ECO:0007669"/>
    <property type="project" value="UniProtKB-SubCell"/>
</dbReference>
<dbReference type="GO" id="GO:0005524">
    <property type="term" value="F:ATP binding"/>
    <property type="evidence" value="ECO:0007669"/>
    <property type="project" value="UniProtKB-UniRule"/>
</dbReference>
<dbReference type="GO" id="GO:0140662">
    <property type="term" value="F:ATP-dependent protein folding chaperone"/>
    <property type="evidence" value="ECO:0007669"/>
    <property type="project" value="InterPro"/>
</dbReference>
<dbReference type="GO" id="GO:0016853">
    <property type="term" value="F:isomerase activity"/>
    <property type="evidence" value="ECO:0007669"/>
    <property type="project" value="UniProtKB-KW"/>
</dbReference>
<dbReference type="GO" id="GO:0051082">
    <property type="term" value="F:unfolded protein binding"/>
    <property type="evidence" value="ECO:0007669"/>
    <property type="project" value="UniProtKB-UniRule"/>
</dbReference>
<dbReference type="GO" id="GO:0042026">
    <property type="term" value="P:protein refolding"/>
    <property type="evidence" value="ECO:0007669"/>
    <property type="project" value="UniProtKB-UniRule"/>
</dbReference>
<dbReference type="CDD" id="cd03344">
    <property type="entry name" value="GroEL"/>
    <property type="match status" value="1"/>
</dbReference>
<dbReference type="FunFam" id="3.50.7.10:FF:000001">
    <property type="entry name" value="60 kDa chaperonin"/>
    <property type="match status" value="1"/>
</dbReference>
<dbReference type="Gene3D" id="3.50.7.10">
    <property type="entry name" value="GroEL"/>
    <property type="match status" value="1"/>
</dbReference>
<dbReference type="Gene3D" id="1.10.560.10">
    <property type="entry name" value="GroEL-like equatorial domain"/>
    <property type="match status" value="1"/>
</dbReference>
<dbReference type="Gene3D" id="3.30.260.10">
    <property type="entry name" value="TCP-1-like chaperonin intermediate domain"/>
    <property type="match status" value="1"/>
</dbReference>
<dbReference type="HAMAP" id="MF_00600">
    <property type="entry name" value="CH60"/>
    <property type="match status" value="1"/>
</dbReference>
<dbReference type="InterPro" id="IPR018370">
    <property type="entry name" value="Chaperonin_Cpn60_CS"/>
</dbReference>
<dbReference type="InterPro" id="IPR001844">
    <property type="entry name" value="Cpn60/GroEL"/>
</dbReference>
<dbReference type="InterPro" id="IPR002423">
    <property type="entry name" value="Cpn60/GroEL/TCP-1"/>
</dbReference>
<dbReference type="InterPro" id="IPR027409">
    <property type="entry name" value="GroEL-like_apical_dom_sf"/>
</dbReference>
<dbReference type="InterPro" id="IPR027413">
    <property type="entry name" value="GROEL-like_equatorial_sf"/>
</dbReference>
<dbReference type="InterPro" id="IPR027410">
    <property type="entry name" value="TCP-1-like_intermed_sf"/>
</dbReference>
<dbReference type="NCBIfam" id="TIGR02348">
    <property type="entry name" value="GroEL"/>
    <property type="match status" value="1"/>
</dbReference>
<dbReference type="NCBIfam" id="NF000592">
    <property type="entry name" value="PRK00013.1"/>
    <property type="match status" value="1"/>
</dbReference>
<dbReference type="NCBIfam" id="NF009487">
    <property type="entry name" value="PRK12849.1"/>
    <property type="match status" value="1"/>
</dbReference>
<dbReference type="NCBIfam" id="NF009488">
    <property type="entry name" value="PRK12850.1"/>
    <property type="match status" value="1"/>
</dbReference>
<dbReference type="NCBIfam" id="NF009489">
    <property type="entry name" value="PRK12851.1"/>
    <property type="match status" value="1"/>
</dbReference>
<dbReference type="PANTHER" id="PTHR45633">
    <property type="entry name" value="60 KDA HEAT SHOCK PROTEIN, MITOCHONDRIAL"/>
    <property type="match status" value="1"/>
</dbReference>
<dbReference type="Pfam" id="PF00118">
    <property type="entry name" value="Cpn60_TCP1"/>
    <property type="match status" value="1"/>
</dbReference>
<dbReference type="PRINTS" id="PR00298">
    <property type="entry name" value="CHAPERONIN60"/>
</dbReference>
<dbReference type="SUPFAM" id="SSF52029">
    <property type="entry name" value="GroEL apical domain-like"/>
    <property type="match status" value="1"/>
</dbReference>
<dbReference type="SUPFAM" id="SSF48592">
    <property type="entry name" value="GroEL equatorial domain-like"/>
    <property type="match status" value="1"/>
</dbReference>
<dbReference type="SUPFAM" id="SSF54849">
    <property type="entry name" value="GroEL-intermediate domain like"/>
    <property type="match status" value="1"/>
</dbReference>
<dbReference type="PROSITE" id="PS00296">
    <property type="entry name" value="CHAPERONINS_CPN60"/>
    <property type="match status" value="1"/>
</dbReference>
<accession>A5GMX4</accession>
<reference key="1">
    <citation type="submission" date="2006-05" db="EMBL/GenBank/DDBJ databases">
        <authorList>
            <consortium name="Genoscope"/>
        </authorList>
    </citation>
    <scope>NUCLEOTIDE SEQUENCE [LARGE SCALE GENOMIC DNA]</scope>
    <source>
        <strain>WH7803</strain>
    </source>
</reference>
<gene>
    <name evidence="1" type="primary">groEL1</name>
    <name evidence="1" type="synonym">groL1</name>
    <name type="ordered locus">SynWH7803_1863</name>
</gene>
<keyword id="KW-0067">ATP-binding</keyword>
<keyword id="KW-0143">Chaperone</keyword>
<keyword id="KW-0963">Cytoplasm</keyword>
<keyword id="KW-0413">Isomerase</keyword>
<keyword id="KW-0547">Nucleotide-binding</keyword>
<keyword id="KW-1185">Reference proteome</keyword>
<protein>
    <recommendedName>
        <fullName evidence="1">Chaperonin GroEL 1</fullName>
        <ecNumber evidence="1">5.6.1.7</ecNumber>
    </recommendedName>
    <alternativeName>
        <fullName evidence="1">60 kDa chaperonin 1</fullName>
    </alternativeName>
    <alternativeName>
        <fullName evidence="1">Chaperonin-60 1</fullName>
        <shortName evidence="1">Cpn60 1</shortName>
    </alternativeName>
</protein>